<dbReference type="EMBL" id="CP000419">
    <property type="protein sequence ID" value="ABJ67062.1"/>
    <property type="molecule type" value="Genomic_DNA"/>
</dbReference>
<dbReference type="RefSeq" id="WP_002952208.1">
    <property type="nucleotide sequence ID" value="NZ_CP086001.1"/>
</dbReference>
<dbReference type="SMR" id="Q03IB0"/>
<dbReference type="GeneID" id="66899700"/>
<dbReference type="KEGG" id="ste:STER_1953"/>
<dbReference type="HOGENOM" id="CLU_129084_2_3_9"/>
<dbReference type="GO" id="GO:0015934">
    <property type="term" value="C:large ribosomal subunit"/>
    <property type="evidence" value="ECO:0007669"/>
    <property type="project" value="InterPro"/>
</dbReference>
<dbReference type="GO" id="GO:0003735">
    <property type="term" value="F:structural constituent of ribosome"/>
    <property type="evidence" value="ECO:0007669"/>
    <property type="project" value="InterPro"/>
</dbReference>
<dbReference type="GO" id="GO:0006412">
    <property type="term" value="P:translation"/>
    <property type="evidence" value="ECO:0007669"/>
    <property type="project" value="UniProtKB-UniRule"/>
</dbReference>
<dbReference type="HAMAP" id="MF_00340">
    <property type="entry name" value="Ribosomal_bL32"/>
    <property type="match status" value="1"/>
</dbReference>
<dbReference type="InterPro" id="IPR002677">
    <property type="entry name" value="Ribosomal_bL32"/>
</dbReference>
<dbReference type="InterPro" id="IPR044957">
    <property type="entry name" value="Ribosomal_bL32_bact"/>
</dbReference>
<dbReference type="InterPro" id="IPR011332">
    <property type="entry name" value="Ribosomal_zn-bd"/>
</dbReference>
<dbReference type="NCBIfam" id="TIGR01031">
    <property type="entry name" value="rpmF_bact"/>
    <property type="match status" value="1"/>
</dbReference>
<dbReference type="PANTHER" id="PTHR35534">
    <property type="entry name" value="50S RIBOSOMAL PROTEIN L32"/>
    <property type="match status" value="1"/>
</dbReference>
<dbReference type="PANTHER" id="PTHR35534:SF1">
    <property type="entry name" value="LARGE RIBOSOMAL SUBUNIT PROTEIN BL32"/>
    <property type="match status" value="1"/>
</dbReference>
<dbReference type="Pfam" id="PF01783">
    <property type="entry name" value="Ribosomal_L32p"/>
    <property type="match status" value="1"/>
</dbReference>
<dbReference type="SUPFAM" id="SSF57829">
    <property type="entry name" value="Zn-binding ribosomal proteins"/>
    <property type="match status" value="1"/>
</dbReference>
<feature type="chain" id="PRO_0000296582" description="Large ribosomal subunit protein bL32">
    <location>
        <begin position="1"/>
        <end position="60"/>
    </location>
</feature>
<feature type="region of interest" description="Disordered" evidence="2">
    <location>
        <begin position="1"/>
        <end position="21"/>
    </location>
</feature>
<feature type="compositionally biased region" description="Basic residues" evidence="2">
    <location>
        <begin position="7"/>
        <end position="20"/>
    </location>
</feature>
<name>RL32_STRTD</name>
<proteinExistence type="inferred from homology"/>
<reference key="1">
    <citation type="journal article" date="2006" name="Proc. Natl. Acad. Sci. U.S.A.">
        <title>Comparative genomics of the lactic acid bacteria.</title>
        <authorList>
            <person name="Makarova K.S."/>
            <person name="Slesarev A."/>
            <person name="Wolf Y.I."/>
            <person name="Sorokin A."/>
            <person name="Mirkin B."/>
            <person name="Koonin E.V."/>
            <person name="Pavlov A."/>
            <person name="Pavlova N."/>
            <person name="Karamychev V."/>
            <person name="Polouchine N."/>
            <person name="Shakhova V."/>
            <person name="Grigoriev I."/>
            <person name="Lou Y."/>
            <person name="Rohksar D."/>
            <person name="Lucas S."/>
            <person name="Huang K."/>
            <person name="Goodstein D.M."/>
            <person name="Hawkins T."/>
            <person name="Plengvidhya V."/>
            <person name="Welker D."/>
            <person name="Hughes J."/>
            <person name="Goh Y."/>
            <person name="Benson A."/>
            <person name="Baldwin K."/>
            <person name="Lee J.-H."/>
            <person name="Diaz-Muniz I."/>
            <person name="Dosti B."/>
            <person name="Smeianov V."/>
            <person name="Wechter W."/>
            <person name="Barabote R."/>
            <person name="Lorca G."/>
            <person name="Altermann E."/>
            <person name="Barrangou R."/>
            <person name="Ganesan B."/>
            <person name="Xie Y."/>
            <person name="Rawsthorne H."/>
            <person name="Tamir D."/>
            <person name="Parker C."/>
            <person name="Breidt F."/>
            <person name="Broadbent J.R."/>
            <person name="Hutkins R."/>
            <person name="O'Sullivan D."/>
            <person name="Steele J."/>
            <person name="Unlu G."/>
            <person name="Saier M.H. Jr."/>
            <person name="Klaenhammer T."/>
            <person name="Richardson P."/>
            <person name="Kozyavkin S."/>
            <person name="Weimer B.C."/>
            <person name="Mills D.A."/>
        </authorList>
    </citation>
    <scope>NUCLEOTIDE SEQUENCE [LARGE SCALE GENOMIC DNA]</scope>
    <source>
        <strain>ATCC BAA-491 / LMD-9</strain>
    </source>
</reference>
<sequence>MAVPARHTSKAKKNKRRTHYKLTAPSVQFDETTGDYSRSHRVSLKGYYKGRKIAKAASAE</sequence>
<accession>Q03IB0</accession>
<organism>
    <name type="scientific">Streptococcus thermophilus (strain ATCC BAA-491 / LMD-9)</name>
    <dbReference type="NCBI Taxonomy" id="322159"/>
    <lineage>
        <taxon>Bacteria</taxon>
        <taxon>Bacillati</taxon>
        <taxon>Bacillota</taxon>
        <taxon>Bacilli</taxon>
        <taxon>Lactobacillales</taxon>
        <taxon>Streptococcaceae</taxon>
        <taxon>Streptococcus</taxon>
    </lineage>
</organism>
<evidence type="ECO:0000255" key="1">
    <source>
        <dbReference type="HAMAP-Rule" id="MF_00340"/>
    </source>
</evidence>
<evidence type="ECO:0000256" key="2">
    <source>
        <dbReference type="SAM" id="MobiDB-lite"/>
    </source>
</evidence>
<evidence type="ECO:0000305" key="3"/>
<keyword id="KW-0687">Ribonucleoprotein</keyword>
<keyword id="KW-0689">Ribosomal protein</keyword>
<comment type="similarity">
    <text evidence="1">Belongs to the bacterial ribosomal protein bL32 family.</text>
</comment>
<protein>
    <recommendedName>
        <fullName evidence="1">Large ribosomal subunit protein bL32</fullName>
    </recommendedName>
    <alternativeName>
        <fullName evidence="3">50S ribosomal protein L32</fullName>
    </alternativeName>
</protein>
<gene>
    <name evidence="1" type="primary">rpmF</name>
    <name type="ordered locus">STER_1953</name>
</gene>